<evidence type="ECO:0000255" key="1">
    <source>
        <dbReference type="HAMAP-Rule" id="MF_01325"/>
    </source>
</evidence>
<evidence type="ECO:0000256" key="2">
    <source>
        <dbReference type="SAM" id="MobiDB-lite"/>
    </source>
</evidence>
<evidence type="ECO:0000305" key="3"/>
<dbReference type="EMBL" id="CP001275">
    <property type="protein sequence ID" value="ACM04881.1"/>
    <property type="molecule type" value="Genomic_DNA"/>
</dbReference>
<dbReference type="SMR" id="B9KZY7"/>
<dbReference type="STRING" id="309801.trd_0984"/>
<dbReference type="KEGG" id="tro:trd_0984"/>
<dbReference type="eggNOG" id="COG0087">
    <property type="taxonomic scope" value="Bacteria"/>
</dbReference>
<dbReference type="HOGENOM" id="CLU_044142_4_1_0"/>
<dbReference type="OrthoDB" id="9806135at2"/>
<dbReference type="Proteomes" id="UP000000447">
    <property type="component" value="Chromosome"/>
</dbReference>
<dbReference type="GO" id="GO:0022625">
    <property type="term" value="C:cytosolic large ribosomal subunit"/>
    <property type="evidence" value="ECO:0007669"/>
    <property type="project" value="TreeGrafter"/>
</dbReference>
<dbReference type="GO" id="GO:0019843">
    <property type="term" value="F:rRNA binding"/>
    <property type="evidence" value="ECO:0007669"/>
    <property type="project" value="UniProtKB-UniRule"/>
</dbReference>
<dbReference type="GO" id="GO:0003735">
    <property type="term" value="F:structural constituent of ribosome"/>
    <property type="evidence" value="ECO:0007669"/>
    <property type="project" value="InterPro"/>
</dbReference>
<dbReference type="GO" id="GO:0006412">
    <property type="term" value="P:translation"/>
    <property type="evidence" value="ECO:0007669"/>
    <property type="project" value="UniProtKB-UniRule"/>
</dbReference>
<dbReference type="FunFam" id="2.40.30.10:FF:000004">
    <property type="entry name" value="50S ribosomal protein L3"/>
    <property type="match status" value="1"/>
</dbReference>
<dbReference type="FunFam" id="3.30.160.810:FF:000001">
    <property type="entry name" value="50S ribosomal protein L3"/>
    <property type="match status" value="1"/>
</dbReference>
<dbReference type="Gene3D" id="3.30.160.810">
    <property type="match status" value="1"/>
</dbReference>
<dbReference type="Gene3D" id="2.40.30.10">
    <property type="entry name" value="Translation factors"/>
    <property type="match status" value="1"/>
</dbReference>
<dbReference type="HAMAP" id="MF_01325_B">
    <property type="entry name" value="Ribosomal_uL3_B"/>
    <property type="match status" value="1"/>
</dbReference>
<dbReference type="InterPro" id="IPR000597">
    <property type="entry name" value="Ribosomal_uL3"/>
</dbReference>
<dbReference type="InterPro" id="IPR019927">
    <property type="entry name" value="Ribosomal_uL3_bac/org-type"/>
</dbReference>
<dbReference type="InterPro" id="IPR009000">
    <property type="entry name" value="Transl_B-barrel_sf"/>
</dbReference>
<dbReference type="NCBIfam" id="TIGR03625">
    <property type="entry name" value="L3_bact"/>
    <property type="match status" value="1"/>
</dbReference>
<dbReference type="PANTHER" id="PTHR11229">
    <property type="entry name" value="50S RIBOSOMAL PROTEIN L3"/>
    <property type="match status" value="1"/>
</dbReference>
<dbReference type="PANTHER" id="PTHR11229:SF16">
    <property type="entry name" value="LARGE RIBOSOMAL SUBUNIT PROTEIN UL3C"/>
    <property type="match status" value="1"/>
</dbReference>
<dbReference type="Pfam" id="PF00297">
    <property type="entry name" value="Ribosomal_L3"/>
    <property type="match status" value="1"/>
</dbReference>
<dbReference type="SUPFAM" id="SSF50447">
    <property type="entry name" value="Translation proteins"/>
    <property type="match status" value="1"/>
</dbReference>
<name>RL3_THERP</name>
<comment type="function">
    <text evidence="1">One of the primary rRNA binding proteins, it binds directly near the 3'-end of the 23S rRNA, where it nucleates assembly of the 50S subunit.</text>
</comment>
<comment type="subunit">
    <text evidence="1">Part of the 50S ribosomal subunit. Forms a cluster with proteins L14 and L19.</text>
</comment>
<comment type="similarity">
    <text evidence="1">Belongs to the universal ribosomal protein uL3 family.</text>
</comment>
<reference key="1">
    <citation type="journal article" date="2009" name="PLoS ONE">
        <title>Complete genome sequence of the aerobic CO-oxidizing thermophile Thermomicrobium roseum.</title>
        <authorList>
            <person name="Wu D."/>
            <person name="Raymond J."/>
            <person name="Wu M."/>
            <person name="Chatterji S."/>
            <person name="Ren Q."/>
            <person name="Graham J.E."/>
            <person name="Bryant D.A."/>
            <person name="Robb F."/>
            <person name="Colman A."/>
            <person name="Tallon L.J."/>
            <person name="Badger J.H."/>
            <person name="Madupu R."/>
            <person name="Ward N.L."/>
            <person name="Eisen J.A."/>
        </authorList>
    </citation>
    <scope>NUCLEOTIDE SEQUENCE [LARGE SCALE GENOMIC DNA]</scope>
    <source>
        <strain>ATCC 27502 / DSM 5159 / P-2</strain>
    </source>
</reference>
<keyword id="KW-1185">Reference proteome</keyword>
<keyword id="KW-0687">Ribonucleoprotein</keyword>
<keyword id="KW-0689">Ribosomal protein</keyword>
<keyword id="KW-0694">RNA-binding</keyword>
<keyword id="KW-0699">rRNA-binding</keyword>
<protein>
    <recommendedName>
        <fullName evidence="1">Large ribosomal subunit protein uL3</fullName>
    </recommendedName>
    <alternativeName>
        <fullName evidence="3">50S ribosomal protein L3</fullName>
    </alternativeName>
</protein>
<feature type="chain" id="PRO_1000165912" description="Large ribosomal subunit protein uL3">
    <location>
        <begin position="1"/>
        <end position="214"/>
    </location>
</feature>
<feature type="region of interest" description="Disordered" evidence="2">
    <location>
        <begin position="119"/>
        <end position="159"/>
    </location>
</feature>
<proteinExistence type="inferred from homology"/>
<accession>B9KZY7</accession>
<gene>
    <name evidence="1" type="primary">rplC</name>
    <name type="ordered locus">trd_0984</name>
</gene>
<organism>
    <name type="scientific">Thermomicrobium roseum (strain ATCC 27502 / DSM 5159 / P-2)</name>
    <dbReference type="NCBI Taxonomy" id="309801"/>
    <lineage>
        <taxon>Bacteria</taxon>
        <taxon>Pseudomonadati</taxon>
        <taxon>Thermomicrobiota</taxon>
        <taxon>Thermomicrobia</taxon>
        <taxon>Thermomicrobiales</taxon>
        <taxon>Thermomicrobiaceae</taxon>
        <taxon>Thermomicrobium</taxon>
    </lineage>
</organism>
<sequence length="214" mass="23446">MIEGLLGRKLGMTQIFDDEGRAIPVTVLEVGPCVVTQVKTSDRDGYQAVQLGFGHRKRQNRPMQGHLRASGASPRYLKEVRVDDATRFQVGQVIDCTIFQPGQLVDVIGWRKGRGFQGGVKRHGFAGGPKTHGQSDRHRAPGSIGPTTDPGRVHKGKRMAGRMGPVRVTVQNLRVERVDPQRNLVLVRGAVPGHPNGLVIVRYAVKQRRAKATA</sequence>